<feature type="chain" id="PRO_0000307330" description="PIH1 domain-containing protein 1">
    <location>
        <begin position="1"/>
        <end position="290"/>
    </location>
</feature>
<feature type="site" description="Interacts with TELO2" evidence="2">
    <location>
        <position position="57"/>
    </location>
</feature>
<feature type="site" description="Interacts with TELO2" evidence="2">
    <location>
        <position position="64"/>
    </location>
</feature>
<feature type="site" description="Interacts with TELO2" evidence="1">
    <location>
        <position position="113"/>
    </location>
</feature>
<feature type="modified residue" description="Phosphoserine" evidence="4">
    <location>
        <position position="12"/>
    </location>
</feature>
<feature type="modified residue" description="Phosphoserine" evidence="4">
    <location>
        <position position="16"/>
    </location>
</feature>
<feature type="modified residue" description="Phosphoserine" evidence="2">
    <location>
        <position position="173"/>
    </location>
</feature>
<keyword id="KW-0539">Nucleus</keyword>
<keyword id="KW-0597">Phosphoprotein</keyword>
<keyword id="KW-1185">Reference proteome</keyword>
<keyword id="KW-0804">Transcription</keyword>
<keyword id="KW-0805">Transcription regulation</keyword>
<reference key="1">
    <citation type="journal article" date="2004" name="Genome Res.">
        <title>The status, quality, and expansion of the NIH full-length cDNA project: the Mammalian Gene Collection (MGC).</title>
        <authorList>
            <consortium name="The MGC Project Team"/>
        </authorList>
    </citation>
    <scope>NUCLEOTIDE SEQUENCE [LARGE SCALE MRNA]</scope>
    <source>
        <tissue>Spleen</tissue>
    </source>
</reference>
<reference key="2">
    <citation type="journal article" date="2012" name="Nat. Commun.">
        <title>Quantitative maps of protein phosphorylation sites across 14 different rat organs and tissues.</title>
        <authorList>
            <person name="Lundby A."/>
            <person name="Secher A."/>
            <person name="Lage K."/>
            <person name="Nordsborg N.B."/>
            <person name="Dmytriyev A."/>
            <person name="Lundby C."/>
            <person name="Olsen J.V."/>
        </authorList>
    </citation>
    <scope>PHOSPHORYLATION [LARGE SCALE ANALYSIS] AT SER-12 AND SER-16</scope>
    <scope>IDENTIFICATION BY MASS SPECTROMETRY [LARGE SCALE ANALYSIS]</scope>
</reference>
<gene>
    <name type="primary">Pih1d1</name>
</gene>
<protein>
    <recommendedName>
        <fullName>PIH1 domain-containing protein 1</fullName>
    </recommendedName>
</protein>
<accession>Q4V7F5</accession>
<organism>
    <name type="scientific">Rattus norvegicus</name>
    <name type="common">Rat</name>
    <dbReference type="NCBI Taxonomy" id="10116"/>
    <lineage>
        <taxon>Eukaryota</taxon>
        <taxon>Metazoa</taxon>
        <taxon>Chordata</taxon>
        <taxon>Craniata</taxon>
        <taxon>Vertebrata</taxon>
        <taxon>Euteleostomi</taxon>
        <taxon>Mammalia</taxon>
        <taxon>Eutheria</taxon>
        <taxon>Euarchontoglires</taxon>
        <taxon>Glires</taxon>
        <taxon>Rodentia</taxon>
        <taxon>Myomorpha</taxon>
        <taxon>Muroidea</taxon>
        <taxon>Muridae</taxon>
        <taxon>Murinae</taxon>
        <taxon>Rattus</taxon>
    </lineage>
</organism>
<proteinExistence type="evidence at protein level"/>
<dbReference type="EMBL" id="BC097946">
    <property type="protein sequence ID" value="AAH97946.1"/>
    <property type="molecule type" value="mRNA"/>
</dbReference>
<dbReference type="RefSeq" id="NP_001020039.1">
    <property type="nucleotide sequence ID" value="NM_001024868.1"/>
</dbReference>
<dbReference type="RefSeq" id="XP_006229089.1">
    <property type="nucleotide sequence ID" value="XM_006229027.4"/>
</dbReference>
<dbReference type="RefSeq" id="XP_006229090.1">
    <property type="nucleotide sequence ID" value="XM_006229028.3"/>
</dbReference>
<dbReference type="SMR" id="Q4V7F5"/>
<dbReference type="FunCoup" id="Q4V7F5">
    <property type="interactions" value="1568"/>
</dbReference>
<dbReference type="IntAct" id="Q4V7F5">
    <property type="interactions" value="1"/>
</dbReference>
<dbReference type="MINT" id="Q4V7F5"/>
<dbReference type="STRING" id="10116.ENSRNOP00000028022"/>
<dbReference type="iPTMnet" id="Q4V7F5"/>
<dbReference type="PhosphoSitePlus" id="Q4V7F5"/>
<dbReference type="PaxDb" id="10116-ENSRNOP00000028022"/>
<dbReference type="Ensembl" id="ENSRNOT00000119250.1">
    <property type="protein sequence ID" value="ENSRNOP00000089848.1"/>
    <property type="gene ID" value="ENSRNOG00000020634.6"/>
</dbReference>
<dbReference type="GeneID" id="292898"/>
<dbReference type="KEGG" id="rno:292898"/>
<dbReference type="UCSC" id="RGD:1309809">
    <property type="organism name" value="rat"/>
</dbReference>
<dbReference type="AGR" id="RGD:1309809"/>
<dbReference type="CTD" id="55011"/>
<dbReference type="RGD" id="1309809">
    <property type="gene designation" value="Pih1d1"/>
</dbReference>
<dbReference type="eggNOG" id="KOG4356">
    <property type="taxonomic scope" value="Eukaryota"/>
</dbReference>
<dbReference type="GeneTree" id="ENSGT00510000048192"/>
<dbReference type="HOGENOM" id="CLU_062696_0_0_1"/>
<dbReference type="InParanoid" id="Q4V7F5"/>
<dbReference type="OMA" id="KLKNRKC"/>
<dbReference type="OrthoDB" id="5135119at2759"/>
<dbReference type="PhylomeDB" id="Q4V7F5"/>
<dbReference type="TreeFam" id="TF324376"/>
<dbReference type="PRO" id="PR:Q4V7F5"/>
<dbReference type="Proteomes" id="UP000002494">
    <property type="component" value="Chromosome 1"/>
</dbReference>
<dbReference type="Bgee" id="ENSRNOG00000020634">
    <property type="expression patterns" value="Expressed in testis and 20 other cell types or tissues"/>
</dbReference>
<dbReference type="GO" id="GO:0005737">
    <property type="term" value="C:cytoplasm"/>
    <property type="evidence" value="ECO:0000266"/>
    <property type="project" value="RGD"/>
</dbReference>
<dbReference type="GO" id="GO:0005730">
    <property type="term" value="C:nucleolus"/>
    <property type="evidence" value="ECO:0000266"/>
    <property type="project" value="RGD"/>
</dbReference>
<dbReference type="GO" id="GO:0005634">
    <property type="term" value="C:nucleus"/>
    <property type="evidence" value="ECO:0000250"/>
    <property type="project" value="UniProtKB"/>
</dbReference>
<dbReference type="GO" id="GO:0070761">
    <property type="term" value="C:pre-snoRNP complex"/>
    <property type="evidence" value="ECO:0000266"/>
    <property type="project" value="RGD"/>
</dbReference>
<dbReference type="GO" id="GO:0097255">
    <property type="term" value="C:R2TP complex"/>
    <property type="evidence" value="ECO:0000266"/>
    <property type="project" value="RGD"/>
</dbReference>
<dbReference type="GO" id="GO:1990904">
    <property type="term" value="C:ribonucleoprotein complex"/>
    <property type="evidence" value="ECO:0000318"/>
    <property type="project" value="GO_Central"/>
</dbReference>
<dbReference type="GO" id="GO:1990062">
    <property type="term" value="C:RPAP3/R2TP/prefoldin-like complex"/>
    <property type="evidence" value="ECO:0000266"/>
    <property type="project" value="RGD"/>
</dbReference>
<dbReference type="GO" id="GO:0051117">
    <property type="term" value="F:ATPase binding"/>
    <property type="evidence" value="ECO:0000266"/>
    <property type="project" value="RGD"/>
</dbReference>
<dbReference type="GO" id="GO:0042393">
    <property type="term" value="F:histone binding"/>
    <property type="evidence" value="ECO:0000266"/>
    <property type="project" value="RGD"/>
</dbReference>
<dbReference type="GO" id="GO:0140566">
    <property type="term" value="F:histone reader activity"/>
    <property type="evidence" value="ECO:0000266"/>
    <property type="project" value="RGD"/>
</dbReference>
<dbReference type="GO" id="GO:0051219">
    <property type="term" value="F:phosphoprotein binding"/>
    <property type="evidence" value="ECO:0000266"/>
    <property type="project" value="RGD"/>
</dbReference>
<dbReference type="GO" id="GO:0019901">
    <property type="term" value="F:protein kinase binding"/>
    <property type="evidence" value="ECO:0000266"/>
    <property type="project" value="RGD"/>
</dbReference>
<dbReference type="GO" id="GO:0000492">
    <property type="term" value="P:box C/D snoRNP assembly"/>
    <property type="evidence" value="ECO:0000266"/>
    <property type="project" value="RGD"/>
</dbReference>
<dbReference type="GO" id="GO:0006338">
    <property type="term" value="P:chromatin remodeling"/>
    <property type="evidence" value="ECO:0000266"/>
    <property type="project" value="RGD"/>
</dbReference>
<dbReference type="GO" id="GO:0030855">
    <property type="term" value="P:epithelial cell differentiation"/>
    <property type="evidence" value="ECO:0000266"/>
    <property type="project" value="RGD"/>
</dbReference>
<dbReference type="GO" id="GO:1902661">
    <property type="term" value="P:positive regulation of glucose mediated signaling pathway"/>
    <property type="evidence" value="ECO:0000266"/>
    <property type="project" value="RGD"/>
</dbReference>
<dbReference type="GO" id="GO:1904263">
    <property type="term" value="P:positive regulation of TORC1 signaling"/>
    <property type="evidence" value="ECO:0000266"/>
    <property type="project" value="RGD"/>
</dbReference>
<dbReference type="GO" id="GO:1901838">
    <property type="term" value="P:positive regulation of transcription of nucleolar large rRNA by RNA polymerase I"/>
    <property type="evidence" value="ECO:0000266"/>
    <property type="project" value="RGD"/>
</dbReference>
<dbReference type="GO" id="GO:0006364">
    <property type="term" value="P:rRNA processing"/>
    <property type="evidence" value="ECO:0000318"/>
    <property type="project" value="GO_Central"/>
</dbReference>
<dbReference type="GO" id="GO:0048254">
    <property type="term" value="P:snoRNA localization"/>
    <property type="evidence" value="ECO:0000266"/>
    <property type="project" value="RGD"/>
</dbReference>
<dbReference type="GO" id="GO:1905669">
    <property type="term" value="P:TORC1 complex assembly"/>
    <property type="evidence" value="ECO:0000266"/>
    <property type="project" value="RGD"/>
</dbReference>
<dbReference type="InterPro" id="IPR050734">
    <property type="entry name" value="PIH1/Kintoun_subfamily"/>
</dbReference>
<dbReference type="InterPro" id="IPR012981">
    <property type="entry name" value="PIH1_N"/>
</dbReference>
<dbReference type="InterPro" id="IPR041442">
    <property type="entry name" value="PIH1D1/2/3_CS-like"/>
</dbReference>
<dbReference type="PANTHER" id="PTHR22997">
    <property type="entry name" value="PIH1 DOMAIN-CONTAINING PROTEIN 1"/>
    <property type="match status" value="1"/>
</dbReference>
<dbReference type="PANTHER" id="PTHR22997:SF0">
    <property type="entry name" value="PIH1 DOMAIN-CONTAINING PROTEIN 1"/>
    <property type="match status" value="1"/>
</dbReference>
<dbReference type="Pfam" id="PF08190">
    <property type="entry name" value="PIH1"/>
    <property type="match status" value="1"/>
</dbReference>
<dbReference type="Pfam" id="PF18201">
    <property type="entry name" value="PIH1_CS"/>
    <property type="match status" value="1"/>
</dbReference>
<evidence type="ECO:0000250" key="1">
    <source>
        <dbReference type="UniProtKB" id="Q9CQJ2"/>
    </source>
</evidence>
<evidence type="ECO:0000250" key="2">
    <source>
        <dbReference type="UniProtKB" id="Q9NWS0"/>
    </source>
</evidence>
<evidence type="ECO:0000305" key="3"/>
<evidence type="ECO:0007744" key="4">
    <source>
    </source>
</evidence>
<sequence>MADSKLLAPELSDAESMGEETVRFQELLLKASKELQQAQTARPESTQIQPKPGFCIKTNSSEGKVFINICHSPSIPPPVDVTEDELLQMLEEDQAGFRIPMSLGEPHAELDAKGQGCTAYDVAVNSNFYLRMQNSDFLRELVVTIAREGLEDKYGLQLNPEWRMLKYRSFLGSISQQSIRSQQRPRIQELGTLDTHDSLGTRHGPERPHLNLWLEAPDLLLAEVDLPKLDGAQGLALEIGENRLVVGGPQQLYHLDACIPLRINSEASRAAFHHRRKQLMVSMPLLSASS</sequence>
<name>PIHD1_RAT</name>
<comment type="function">
    <text evidence="2">Involved in the assembly of C/D box small nucleolar ribonucleoprotein (snoRNP) particles (By similarity). Recruits the SWI/SNF complex to the core promoter of rRNA genes and enhances pre-rRNA transcription (By similarity). Mediates interaction of TELO2 with the R2TP complex which is necessary for the stability of MTOR and SMG1 (By similarity). Positively regulates the assembly and activity of the mTORC1 complex (By similarity).</text>
</comment>
<comment type="subunit">
    <text evidence="1 2">Component of the R2TP complex composed at least of RUVBL1, RUVBL2, RPAP3 and PIHD1 (By similarity). Component of the PAQosome complex which is responsible for the biogenesis of several protein complexes and which consists of R2TP complex members RUVBL1, RUVBL2, RPAP3 and PIH1D1, URI complex members PFDN2, PFDN6, PDRG1, UXT and URI1 as well as ASDURF, POLR2E and DNAAF10/WDR92 (By similarity). Interacts with phosphorylated TELO2 and mediates interaction of TELO2 with the R2TP complex (By similarity). Interacts with phosphorylated ECD, EFTUD2/SNRP116, RPB1 and UBR5 and with RPB1 in a phosphorylation-independent manner (By similarity). Interacts with the core C/D box snoRNP particle components NOP58 and FBL and with RUVBL1/TIP49 (By similarity). Interacts with RPAP3 and DNAAF10 (By similarity). Interacts with histone H4 and with SWI/SNF complex member SMARCB1/SNF5 (By similarity). Interacts with the mTORC1 complex member RPTOR (By similarity). Interacts with MSL1 (By similarity).</text>
</comment>
<comment type="subcellular location">
    <subcellularLocation>
        <location evidence="1">Nucleus</location>
    </subcellularLocation>
</comment>
<comment type="domain">
    <text evidence="2">The N-terminal region is required for binding to phosphorylated substrates while the C-terminal region binds to the other R2TP complex components.</text>
</comment>
<comment type="similarity">
    <text evidence="3">Belongs to the PIH1 family.</text>
</comment>